<organism>
    <name type="scientific">Mycoplasma pneumoniae (strain ATCC 29342 / M129 / Subtype 1)</name>
    <name type="common">Mycoplasmoides pneumoniae</name>
    <dbReference type="NCBI Taxonomy" id="272634"/>
    <lineage>
        <taxon>Bacteria</taxon>
        <taxon>Bacillati</taxon>
        <taxon>Mycoplasmatota</taxon>
        <taxon>Mycoplasmoidales</taxon>
        <taxon>Mycoplasmoidaceae</taxon>
        <taxon>Mycoplasmoides</taxon>
    </lineage>
</organism>
<reference key="1">
    <citation type="journal article" date="1996" name="Nucleic Acids Res.">
        <title>Complete sequence analysis of the genome of the bacterium Mycoplasma pneumoniae.</title>
        <authorList>
            <person name="Himmelreich R."/>
            <person name="Hilbert H."/>
            <person name="Plagens H."/>
            <person name="Pirkl E."/>
            <person name="Li B.-C."/>
            <person name="Herrmann R."/>
        </authorList>
    </citation>
    <scope>NUCLEOTIDE SEQUENCE [LARGE SCALE GENOMIC DNA]</scope>
    <source>
        <strain>ATCC 29342 / M129 / Subtype 1</strain>
    </source>
</reference>
<reference key="2">
    <citation type="journal article" date="1994" name="Mol. Microbiol.">
        <title>Identification and characterization of hitherto unknown Mycoplasma pneumoniae proteins.</title>
        <authorList>
            <person name="Proft T."/>
            <person name="Herrmann R."/>
        </authorList>
    </citation>
    <scope>NUCLEOTIDE SEQUENCE [GENOMIC DNA] OF 118-176</scope>
    <source>
        <strain>ATCC 29342 / M129 / Subtype 1</strain>
    </source>
</reference>
<gene>
    <name type="primary">tig</name>
    <name type="ordered locus">MPN_331</name>
    <name type="ORF">MP505</name>
</gene>
<keyword id="KW-0002">3D-structure</keyword>
<keyword id="KW-0131">Cell cycle</keyword>
<keyword id="KW-0132">Cell division</keyword>
<keyword id="KW-0143">Chaperone</keyword>
<keyword id="KW-0963">Cytoplasm</keyword>
<keyword id="KW-0413">Isomerase</keyword>
<keyword id="KW-1185">Reference proteome</keyword>
<keyword id="KW-0697">Rotamase</keyword>
<accession>P75454</accession>
<accession>Q50352</accession>
<name>TIG_MYCPN</name>
<protein>
    <recommendedName>
        <fullName>Trigger factor</fullName>
        <shortName>TF</shortName>
        <ecNumber>5.2.1.8</ecNumber>
    </recommendedName>
    <alternativeName>
        <fullName>PPIase</fullName>
    </alternativeName>
</protein>
<evidence type="ECO:0000250" key="1"/>
<evidence type="ECO:0000305" key="2"/>
<evidence type="ECO:0007829" key="3">
    <source>
        <dbReference type="PDB" id="8P8B"/>
    </source>
</evidence>
<comment type="function">
    <text evidence="1">Involved in protein export. Acts as a chaperone by maintaining the newly synthesized protein in an open conformation. Functions as a peptidyl-prolyl cis-trans isomerase (By similarity).</text>
</comment>
<comment type="catalytic activity">
    <reaction>
        <text>[protein]-peptidylproline (omega=180) = [protein]-peptidylproline (omega=0)</text>
        <dbReference type="Rhea" id="RHEA:16237"/>
        <dbReference type="Rhea" id="RHEA-COMP:10747"/>
        <dbReference type="Rhea" id="RHEA-COMP:10748"/>
        <dbReference type="ChEBI" id="CHEBI:83833"/>
        <dbReference type="ChEBI" id="CHEBI:83834"/>
        <dbReference type="EC" id="5.2.1.8"/>
    </reaction>
</comment>
<comment type="subcellular location">
    <subcellularLocation>
        <location>Cytoplasm</location>
    </subcellularLocation>
    <text evidence="1">About half TF is bound to the ribosome near the polypeptide exit tunnel while the other half is free in the cytoplasm.</text>
</comment>
<comment type="domain">
    <text evidence="1">Consists of 3 domains; the N-terminus binds the ribosome, the middle domain has PPIase activity, while the C-terminus has intrinsic chaperone activity on its own.</text>
</comment>
<comment type="similarity">
    <text evidence="2">Belongs to the FKBP-type PPIase family. Tig subfamily.</text>
</comment>
<dbReference type="EC" id="5.2.1.8"/>
<dbReference type="EMBL" id="U00089">
    <property type="protein sequence ID" value="AAB96153.1"/>
    <property type="molecule type" value="Genomic_DNA"/>
</dbReference>
<dbReference type="EMBL" id="Z32656">
    <property type="protein sequence ID" value="CAA83577.1"/>
    <property type="molecule type" value="Genomic_DNA"/>
</dbReference>
<dbReference type="PIR" id="S73831">
    <property type="entry name" value="S73831"/>
</dbReference>
<dbReference type="RefSeq" id="NP_110019.1">
    <property type="nucleotide sequence ID" value="NC_000912.1"/>
</dbReference>
<dbReference type="RefSeq" id="WP_010874687.1">
    <property type="nucleotide sequence ID" value="NC_000912.1"/>
</dbReference>
<dbReference type="PDB" id="8P7X">
    <property type="method" value="EM"/>
    <property type="resolution" value="3.03 A"/>
    <property type="chains" value="X=1-444"/>
</dbReference>
<dbReference type="PDB" id="8P7Y">
    <property type="method" value="EM"/>
    <property type="resolution" value="3.70 A"/>
    <property type="chains" value="X=1-444"/>
</dbReference>
<dbReference type="PDB" id="8P8B">
    <property type="method" value="EM"/>
    <property type="resolution" value="2.90 A"/>
    <property type="chains" value="X=1-444"/>
</dbReference>
<dbReference type="PDB" id="8P8V">
    <property type="method" value="EM"/>
    <property type="resolution" value="8.70 A"/>
    <property type="chains" value="X=1-444"/>
</dbReference>
<dbReference type="PDB" id="8P8W">
    <property type="method" value="EM"/>
    <property type="resolution" value="8.70 A"/>
    <property type="chains" value="X=1-444"/>
</dbReference>
<dbReference type="PDBsum" id="8P7X"/>
<dbReference type="PDBsum" id="8P7Y"/>
<dbReference type="PDBsum" id="8P8B"/>
<dbReference type="PDBsum" id="8P8V"/>
<dbReference type="PDBsum" id="8P8W"/>
<dbReference type="SMR" id="P75454"/>
<dbReference type="IntAct" id="P75454">
    <property type="interactions" value="4"/>
</dbReference>
<dbReference type="STRING" id="272634.MPN_331"/>
<dbReference type="EnsemblBacteria" id="AAB96153">
    <property type="protein sequence ID" value="AAB96153"/>
    <property type="gene ID" value="MPN_331"/>
</dbReference>
<dbReference type="KEGG" id="mpn:MPN_331"/>
<dbReference type="PATRIC" id="fig|272634.6.peg.355"/>
<dbReference type="HOGENOM" id="CLU_033058_3_2_14"/>
<dbReference type="OrthoDB" id="9767721at2"/>
<dbReference type="BioCyc" id="MPNE272634:G1GJ3-524-MONOMER"/>
<dbReference type="Proteomes" id="UP000000808">
    <property type="component" value="Chromosome"/>
</dbReference>
<dbReference type="GO" id="GO:0005737">
    <property type="term" value="C:cytoplasm"/>
    <property type="evidence" value="ECO:0007669"/>
    <property type="project" value="UniProtKB-SubCell"/>
</dbReference>
<dbReference type="GO" id="GO:0003755">
    <property type="term" value="F:peptidyl-prolyl cis-trans isomerase activity"/>
    <property type="evidence" value="ECO:0007669"/>
    <property type="project" value="UniProtKB-UniRule"/>
</dbReference>
<dbReference type="GO" id="GO:0051301">
    <property type="term" value="P:cell division"/>
    <property type="evidence" value="ECO:0007669"/>
    <property type="project" value="UniProtKB-KW"/>
</dbReference>
<dbReference type="GO" id="GO:0006457">
    <property type="term" value="P:protein folding"/>
    <property type="evidence" value="ECO:0007669"/>
    <property type="project" value="UniProtKB-UniRule"/>
</dbReference>
<dbReference type="GO" id="GO:0015031">
    <property type="term" value="P:protein transport"/>
    <property type="evidence" value="ECO:0007669"/>
    <property type="project" value="UniProtKB-UniRule"/>
</dbReference>
<dbReference type="FunFam" id="3.10.50.40:FF:000001">
    <property type="entry name" value="Trigger factor"/>
    <property type="match status" value="1"/>
</dbReference>
<dbReference type="Gene3D" id="3.10.50.40">
    <property type="match status" value="1"/>
</dbReference>
<dbReference type="Gene3D" id="3.30.70.1050">
    <property type="entry name" value="Trigger factor ribosome-binding domain"/>
    <property type="match status" value="1"/>
</dbReference>
<dbReference type="Gene3D" id="1.10.3120.10">
    <property type="entry name" value="Trigger factor, C-terminal domain"/>
    <property type="match status" value="1"/>
</dbReference>
<dbReference type="HAMAP" id="MF_00303">
    <property type="entry name" value="Trigger_factor_Tig"/>
    <property type="match status" value="1"/>
</dbReference>
<dbReference type="InterPro" id="IPR046357">
    <property type="entry name" value="PPIase_dom_sf"/>
</dbReference>
<dbReference type="InterPro" id="IPR001179">
    <property type="entry name" value="PPIase_FKBP_dom"/>
</dbReference>
<dbReference type="InterPro" id="IPR005215">
    <property type="entry name" value="Trig_fac"/>
</dbReference>
<dbReference type="InterPro" id="IPR008880">
    <property type="entry name" value="Trigger_fac_C"/>
</dbReference>
<dbReference type="InterPro" id="IPR037041">
    <property type="entry name" value="Trigger_fac_C_sf"/>
</dbReference>
<dbReference type="InterPro" id="IPR008881">
    <property type="entry name" value="Trigger_fac_ribosome-bd_bac"/>
</dbReference>
<dbReference type="InterPro" id="IPR036611">
    <property type="entry name" value="Trigger_fac_ribosome-bd_sf"/>
</dbReference>
<dbReference type="InterPro" id="IPR027304">
    <property type="entry name" value="Trigger_fact/SurA_dom_sf"/>
</dbReference>
<dbReference type="NCBIfam" id="TIGR00115">
    <property type="entry name" value="tig"/>
    <property type="match status" value="1"/>
</dbReference>
<dbReference type="Pfam" id="PF00254">
    <property type="entry name" value="FKBP_C"/>
    <property type="match status" value="1"/>
</dbReference>
<dbReference type="Pfam" id="PF05698">
    <property type="entry name" value="Trigger_C"/>
    <property type="match status" value="1"/>
</dbReference>
<dbReference type="Pfam" id="PF05697">
    <property type="entry name" value="Trigger_N"/>
    <property type="match status" value="1"/>
</dbReference>
<dbReference type="PIRSF" id="PIRSF003095">
    <property type="entry name" value="Trigger_factor"/>
    <property type="match status" value="1"/>
</dbReference>
<dbReference type="SUPFAM" id="SSF54534">
    <property type="entry name" value="FKBP-like"/>
    <property type="match status" value="1"/>
</dbReference>
<dbReference type="SUPFAM" id="SSF109998">
    <property type="entry name" value="Triger factor/SurA peptide-binding domain-like"/>
    <property type="match status" value="1"/>
</dbReference>
<dbReference type="SUPFAM" id="SSF102735">
    <property type="entry name" value="Trigger factor ribosome-binding domain"/>
    <property type="match status" value="1"/>
</dbReference>
<dbReference type="PROSITE" id="PS50059">
    <property type="entry name" value="FKBP_PPIASE"/>
    <property type="match status" value="1"/>
</dbReference>
<sequence>MKQYKLVNTTQKEKTLCLEIAIDTKLWKETQQKQTQDLTKNMKIKGFRKGKVPPTLAKDYLDRAELLQRSAQAVIDAIFQPLQQEAVIADNENVIEDFPTIDFKTINENDCVILFDFDLVPQFEPPDYKHIKDLSPIVPLKDEEFNKELHNIEKNKGKLVDVSDKALANNDIAVIDFVGKVDGKVLESATAKQYELTIGSNSFIDGFESGLIGMKVGDKRQLKLKFPKDYHAEELKGKPVEFDIELKAIKQLEITPMDETNFKEYLPAQYQGFNSLKEFKTYFHKLVSAKKLEITLQENSVKIRQFFLANTTLPYIPDSLIKLESDRLLRAQKDQAEQYKIPFERLLAASKLSLEQLQQRNIKEARDNVTFALVMKRIADVEKIKVDNKKIHSEIESIIDVEYPFVNAELKKQMFHNMEQQKDFVESIILNRLTTTKIIEYSTH</sequence>
<feature type="chain" id="PRO_0000179388" description="Trigger factor">
    <location>
        <begin position="1"/>
        <end position="444"/>
    </location>
</feature>
<feature type="domain" description="PPIase FKBP-type">
    <location>
        <begin position="170"/>
        <end position="255"/>
    </location>
</feature>
<feature type="helix" evidence="3">
    <location>
        <begin position="34"/>
        <end position="37"/>
    </location>
</feature>
<feature type="strand" evidence="3">
    <location>
        <begin position="49"/>
        <end position="51"/>
    </location>
</feature>
<proteinExistence type="evidence at protein level"/>